<evidence type="ECO:0000255" key="1">
    <source>
        <dbReference type="HAMAP-Rule" id="MF_01347"/>
    </source>
</evidence>
<reference key="1">
    <citation type="journal article" date="2007" name="PLoS ONE">
        <title>Paradoxical DNA repair and peroxide resistance gene conservation in Bacillus pumilus SAFR-032.</title>
        <authorList>
            <person name="Gioia J."/>
            <person name="Yerrapragada S."/>
            <person name="Qin X."/>
            <person name="Jiang H."/>
            <person name="Igboeli O.C."/>
            <person name="Muzny D."/>
            <person name="Dugan-Rocha S."/>
            <person name="Ding Y."/>
            <person name="Hawes A."/>
            <person name="Liu W."/>
            <person name="Perez L."/>
            <person name="Kovar C."/>
            <person name="Dinh H."/>
            <person name="Lee S."/>
            <person name="Nazareth L."/>
            <person name="Blyth P."/>
            <person name="Holder M."/>
            <person name="Buhay C."/>
            <person name="Tirumalai M.R."/>
            <person name="Liu Y."/>
            <person name="Dasgupta I."/>
            <person name="Bokhetache L."/>
            <person name="Fujita M."/>
            <person name="Karouia F."/>
            <person name="Eswara Moorthy P."/>
            <person name="Siefert J."/>
            <person name="Uzman A."/>
            <person name="Buzumbo P."/>
            <person name="Verma A."/>
            <person name="Zwiya H."/>
            <person name="McWilliams B.D."/>
            <person name="Olowu A."/>
            <person name="Clinkenbeard K.D."/>
            <person name="Newcombe D."/>
            <person name="Golebiewski L."/>
            <person name="Petrosino J.F."/>
            <person name="Nicholson W.L."/>
            <person name="Fox G.E."/>
            <person name="Venkateswaran K."/>
            <person name="Highlander S.K."/>
            <person name="Weinstock G.M."/>
        </authorList>
    </citation>
    <scope>NUCLEOTIDE SEQUENCE [LARGE SCALE GENOMIC DNA]</scope>
    <source>
        <strain>SAFR-032</strain>
    </source>
</reference>
<feature type="chain" id="PRO_1000067722" description="ATP synthase subunit beta">
    <location>
        <begin position="1"/>
        <end position="473"/>
    </location>
</feature>
<feature type="binding site" evidence="1">
    <location>
        <begin position="158"/>
        <end position="165"/>
    </location>
    <ligand>
        <name>ATP</name>
        <dbReference type="ChEBI" id="CHEBI:30616"/>
    </ligand>
</feature>
<name>ATPB_BACP2</name>
<comment type="function">
    <text evidence="1">Produces ATP from ADP in the presence of a proton gradient across the membrane. The catalytic sites are hosted primarily by the beta subunits.</text>
</comment>
<comment type="catalytic activity">
    <reaction evidence="1">
        <text>ATP + H2O + 4 H(+)(in) = ADP + phosphate + 5 H(+)(out)</text>
        <dbReference type="Rhea" id="RHEA:57720"/>
        <dbReference type="ChEBI" id="CHEBI:15377"/>
        <dbReference type="ChEBI" id="CHEBI:15378"/>
        <dbReference type="ChEBI" id="CHEBI:30616"/>
        <dbReference type="ChEBI" id="CHEBI:43474"/>
        <dbReference type="ChEBI" id="CHEBI:456216"/>
        <dbReference type="EC" id="7.1.2.2"/>
    </reaction>
</comment>
<comment type="subunit">
    <text evidence="1">F-type ATPases have 2 components, CF(1) - the catalytic core - and CF(0) - the membrane proton channel. CF(1) has five subunits: alpha(3), beta(3), gamma(1), delta(1), epsilon(1). CF(0) has three main subunits: a(1), b(2) and c(9-12). The alpha and beta chains form an alternating ring which encloses part of the gamma chain. CF(1) is attached to CF(0) by a central stalk formed by the gamma and epsilon chains, while a peripheral stalk is formed by the delta and b chains.</text>
</comment>
<comment type="subcellular location">
    <subcellularLocation>
        <location evidence="1">Cell membrane</location>
        <topology evidence="1">Peripheral membrane protein</topology>
    </subcellularLocation>
</comment>
<comment type="similarity">
    <text evidence="1">Belongs to the ATPase alpha/beta chains family.</text>
</comment>
<protein>
    <recommendedName>
        <fullName evidence="1">ATP synthase subunit beta</fullName>
        <ecNumber evidence="1">7.1.2.2</ecNumber>
    </recommendedName>
    <alternativeName>
        <fullName evidence="1">ATP synthase F1 sector subunit beta</fullName>
    </alternativeName>
    <alternativeName>
        <fullName evidence="1">F-ATPase subunit beta</fullName>
    </alternativeName>
</protein>
<keyword id="KW-0066">ATP synthesis</keyword>
<keyword id="KW-0067">ATP-binding</keyword>
<keyword id="KW-1003">Cell membrane</keyword>
<keyword id="KW-0139">CF(1)</keyword>
<keyword id="KW-0375">Hydrogen ion transport</keyword>
<keyword id="KW-0406">Ion transport</keyword>
<keyword id="KW-0472">Membrane</keyword>
<keyword id="KW-0547">Nucleotide-binding</keyword>
<keyword id="KW-1278">Translocase</keyword>
<keyword id="KW-0813">Transport</keyword>
<proteinExistence type="inferred from homology"/>
<organism>
    <name type="scientific">Bacillus pumilus (strain SAFR-032)</name>
    <dbReference type="NCBI Taxonomy" id="315750"/>
    <lineage>
        <taxon>Bacteria</taxon>
        <taxon>Bacillati</taxon>
        <taxon>Bacillota</taxon>
        <taxon>Bacilli</taxon>
        <taxon>Bacillales</taxon>
        <taxon>Bacillaceae</taxon>
        <taxon>Bacillus</taxon>
    </lineage>
</organism>
<sequence length="473" mass="51844">MKTGRISQIMGPVVDVRFEDGHLPEIYNAIRVSHKAESESEVDIDLTLEVALHLGDDTVRTIAMASTDGVKRGMEAVDLGKPISVPVGNVTLGRVFNVLGDNIDLDEPLGVEAQRDPIHRQAPSFDQLSTEVEILETGIKVVDLLAPYIKGGKIGLFGGAGVGKTVLIQELINNIAQEHGGISVFAGVGERTREGNDLYYEMKDSGVIEKTAMVFGQMNEPPGARMRVALTGLTMAEHFRDELGQDVLFFIDNIYRFTQAGSEVSALLGRMPSAVGYQPTLATEMGQLQERITSTNVGSVTSIQAIYVPADDYTDPAPATTFAHLDATTNLERKLTEMGIYPAVDPLASTSRALAPEIVGEEHYAIAREVQQTLQRYKELQDIIAILGMDELSEDDKLVVHRARRVQFFLSQNFHVAEQFTGQKGSYVPLKETVKGFKEILSGKYDHLPEDAFRLVGRIEEVVEKAKEMGVEA</sequence>
<gene>
    <name evidence="1" type="primary">atpD</name>
    <name type="ordered locus">BPUM_3326</name>
</gene>
<dbReference type="EC" id="7.1.2.2" evidence="1"/>
<dbReference type="EMBL" id="CP000813">
    <property type="protein sequence ID" value="ABV63979.1"/>
    <property type="molecule type" value="Genomic_DNA"/>
</dbReference>
<dbReference type="RefSeq" id="WP_012011546.1">
    <property type="nucleotide sequence ID" value="NZ_VEIS01000002.1"/>
</dbReference>
<dbReference type="SMR" id="A8FIB2"/>
<dbReference type="STRING" id="315750.BPUM_3326"/>
<dbReference type="GeneID" id="5622616"/>
<dbReference type="KEGG" id="bpu:BPUM_3326"/>
<dbReference type="eggNOG" id="COG0055">
    <property type="taxonomic scope" value="Bacteria"/>
</dbReference>
<dbReference type="HOGENOM" id="CLU_022398_0_2_9"/>
<dbReference type="OrthoDB" id="9801639at2"/>
<dbReference type="Proteomes" id="UP000001355">
    <property type="component" value="Chromosome"/>
</dbReference>
<dbReference type="GO" id="GO:0005886">
    <property type="term" value="C:plasma membrane"/>
    <property type="evidence" value="ECO:0007669"/>
    <property type="project" value="UniProtKB-SubCell"/>
</dbReference>
<dbReference type="GO" id="GO:0045259">
    <property type="term" value="C:proton-transporting ATP synthase complex"/>
    <property type="evidence" value="ECO:0007669"/>
    <property type="project" value="UniProtKB-KW"/>
</dbReference>
<dbReference type="GO" id="GO:0005524">
    <property type="term" value="F:ATP binding"/>
    <property type="evidence" value="ECO:0007669"/>
    <property type="project" value="UniProtKB-UniRule"/>
</dbReference>
<dbReference type="GO" id="GO:0016887">
    <property type="term" value="F:ATP hydrolysis activity"/>
    <property type="evidence" value="ECO:0007669"/>
    <property type="project" value="InterPro"/>
</dbReference>
<dbReference type="GO" id="GO:0046933">
    <property type="term" value="F:proton-transporting ATP synthase activity, rotational mechanism"/>
    <property type="evidence" value="ECO:0007669"/>
    <property type="project" value="UniProtKB-UniRule"/>
</dbReference>
<dbReference type="CDD" id="cd18110">
    <property type="entry name" value="ATP-synt_F1_beta_C"/>
    <property type="match status" value="1"/>
</dbReference>
<dbReference type="CDD" id="cd18115">
    <property type="entry name" value="ATP-synt_F1_beta_N"/>
    <property type="match status" value="1"/>
</dbReference>
<dbReference type="CDD" id="cd01133">
    <property type="entry name" value="F1-ATPase_beta_CD"/>
    <property type="match status" value="1"/>
</dbReference>
<dbReference type="FunFam" id="1.10.1140.10:FF:000001">
    <property type="entry name" value="ATP synthase subunit beta"/>
    <property type="match status" value="1"/>
</dbReference>
<dbReference type="FunFam" id="2.40.10.170:FF:000005">
    <property type="entry name" value="ATP synthase subunit beta"/>
    <property type="match status" value="1"/>
</dbReference>
<dbReference type="FunFam" id="3.40.50.300:FF:000004">
    <property type="entry name" value="ATP synthase subunit beta"/>
    <property type="match status" value="1"/>
</dbReference>
<dbReference type="Gene3D" id="2.40.10.170">
    <property type="match status" value="1"/>
</dbReference>
<dbReference type="Gene3D" id="1.10.1140.10">
    <property type="entry name" value="Bovine Mitochondrial F1-atpase, Atp Synthase Beta Chain, Chain D, domain 3"/>
    <property type="match status" value="1"/>
</dbReference>
<dbReference type="Gene3D" id="3.40.50.300">
    <property type="entry name" value="P-loop containing nucleotide triphosphate hydrolases"/>
    <property type="match status" value="1"/>
</dbReference>
<dbReference type="HAMAP" id="MF_01347">
    <property type="entry name" value="ATP_synth_beta_bact"/>
    <property type="match status" value="1"/>
</dbReference>
<dbReference type="InterPro" id="IPR003593">
    <property type="entry name" value="AAA+_ATPase"/>
</dbReference>
<dbReference type="InterPro" id="IPR055190">
    <property type="entry name" value="ATP-synt_VA_C"/>
</dbReference>
<dbReference type="InterPro" id="IPR005722">
    <property type="entry name" value="ATP_synth_F1_bsu"/>
</dbReference>
<dbReference type="InterPro" id="IPR020003">
    <property type="entry name" value="ATPase_a/bsu_AS"/>
</dbReference>
<dbReference type="InterPro" id="IPR050053">
    <property type="entry name" value="ATPase_alpha/beta_chains"/>
</dbReference>
<dbReference type="InterPro" id="IPR004100">
    <property type="entry name" value="ATPase_F1/V1/A1_a/bsu_N"/>
</dbReference>
<dbReference type="InterPro" id="IPR036121">
    <property type="entry name" value="ATPase_F1/V1/A1_a/bsu_N_sf"/>
</dbReference>
<dbReference type="InterPro" id="IPR000194">
    <property type="entry name" value="ATPase_F1/V1/A1_a/bsu_nucl-bd"/>
</dbReference>
<dbReference type="InterPro" id="IPR024034">
    <property type="entry name" value="ATPase_F1/V1_b/a_C"/>
</dbReference>
<dbReference type="InterPro" id="IPR027417">
    <property type="entry name" value="P-loop_NTPase"/>
</dbReference>
<dbReference type="NCBIfam" id="TIGR01039">
    <property type="entry name" value="atpD"/>
    <property type="match status" value="1"/>
</dbReference>
<dbReference type="PANTHER" id="PTHR15184">
    <property type="entry name" value="ATP SYNTHASE"/>
    <property type="match status" value="1"/>
</dbReference>
<dbReference type="PANTHER" id="PTHR15184:SF71">
    <property type="entry name" value="ATP SYNTHASE SUBUNIT BETA, MITOCHONDRIAL"/>
    <property type="match status" value="1"/>
</dbReference>
<dbReference type="Pfam" id="PF00006">
    <property type="entry name" value="ATP-synt_ab"/>
    <property type="match status" value="1"/>
</dbReference>
<dbReference type="Pfam" id="PF02874">
    <property type="entry name" value="ATP-synt_ab_N"/>
    <property type="match status" value="1"/>
</dbReference>
<dbReference type="Pfam" id="PF22919">
    <property type="entry name" value="ATP-synt_VA_C"/>
    <property type="match status" value="1"/>
</dbReference>
<dbReference type="SMART" id="SM00382">
    <property type="entry name" value="AAA"/>
    <property type="match status" value="1"/>
</dbReference>
<dbReference type="SUPFAM" id="SSF47917">
    <property type="entry name" value="C-terminal domain of alpha and beta subunits of F1 ATP synthase"/>
    <property type="match status" value="1"/>
</dbReference>
<dbReference type="SUPFAM" id="SSF50615">
    <property type="entry name" value="N-terminal domain of alpha and beta subunits of F1 ATP synthase"/>
    <property type="match status" value="1"/>
</dbReference>
<dbReference type="SUPFAM" id="SSF52540">
    <property type="entry name" value="P-loop containing nucleoside triphosphate hydrolases"/>
    <property type="match status" value="1"/>
</dbReference>
<dbReference type="PROSITE" id="PS00152">
    <property type="entry name" value="ATPASE_ALPHA_BETA"/>
    <property type="match status" value="1"/>
</dbReference>
<accession>A8FIB2</accession>